<dbReference type="EMBL" id="U56732">
    <property type="protein sequence ID" value="AAD05020.1"/>
    <property type="status" value="ALT_SEQ"/>
    <property type="molecule type" value="mRNA"/>
</dbReference>
<dbReference type="EMBL" id="BC127483">
    <property type="protein sequence ID" value="AAI27484.1"/>
    <property type="molecule type" value="mRNA"/>
</dbReference>
<dbReference type="RefSeq" id="NP_653350.1">
    <property type="nucleotide sequence ID" value="NM_144749.1"/>
</dbReference>
<dbReference type="SMR" id="A0JPL0"/>
<dbReference type="STRING" id="10116.ENSRNOP00000028187"/>
<dbReference type="PhosphoSitePlus" id="A0JPL0"/>
<dbReference type="PaxDb" id="10116-ENSRNOP00000028187"/>
<dbReference type="GeneID" id="246264"/>
<dbReference type="KEGG" id="rno:246264"/>
<dbReference type="UCSC" id="RGD:708385">
    <property type="organism name" value="rat"/>
</dbReference>
<dbReference type="AGR" id="RGD:708385"/>
<dbReference type="CTD" id="233060"/>
<dbReference type="RGD" id="708385">
    <property type="gene designation" value="Zfp382"/>
</dbReference>
<dbReference type="VEuPathDB" id="HostDB:ENSRNOG00000020777"/>
<dbReference type="eggNOG" id="KOG1721">
    <property type="taxonomic scope" value="Eukaryota"/>
</dbReference>
<dbReference type="HOGENOM" id="CLU_002678_44_5_1"/>
<dbReference type="InParanoid" id="A0JPL0"/>
<dbReference type="PhylomeDB" id="A0JPL0"/>
<dbReference type="TreeFam" id="TF337898"/>
<dbReference type="Reactome" id="R-RNO-212436">
    <property type="pathway name" value="Generic Transcription Pathway"/>
</dbReference>
<dbReference type="Reactome" id="R-RNO-9843940">
    <property type="pathway name" value="Regulation of endogenous retroelements by KRAB-ZFP proteins"/>
</dbReference>
<dbReference type="PRO" id="PR:A0JPL0"/>
<dbReference type="Proteomes" id="UP000002494">
    <property type="component" value="Chromosome 1"/>
</dbReference>
<dbReference type="Bgee" id="ENSRNOG00000020777">
    <property type="expression patterns" value="Expressed in frontal cortex and 19 other cell types or tissues"/>
</dbReference>
<dbReference type="ExpressionAtlas" id="A0JPL0">
    <property type="expression patterns" value="baseline and differential"/>
</dbReference>
<dbReference type="GO" id="GO:0005634">
    <property type="term" value="C:nucleus"/>
    <property type="evidence" value="ECO:0007669"/>
    <property type="project" value="UniProtKB-SubCell"/>
</dbReference>
<dbReference type="GO" id="GO:0003700">
    <property type="term" value="F:DNA-binding transcription factor activity"/>
    <property type="evidence" value="ECO:0000318"/>
    <property type="project" value="GO_Central"/>
</dbReference>
<dbReference type="GO" id="GO:0001227">
    <property type="term" value="F:DNA-binding transcription repressor activity, RNA polymerase II-specific"/>
    <property type="evidence" value="ECO:0000314"/>
    <property type="project" value="NTNU_SB"/>
</dbReference>
<dbReference type="GO" id="GO:0000978">
    <property type="term" value="F:RNA polymerase II cis-regulatory region sequence-specific DNA binding"/>
    <property type="evidence" value="ECO:0000318"/>
    <property type="project" value="GO_Central"/>
</dbReference>
<dbReference type="GO" id="GO:0043565">
    <property type="term" value="F:sequence-specific DNA binding"/>
    <property type="evidence" value="ECO:0000314"/>
    <property type="project" value="NTNU_SB"/>
</dbReference>
<dbReference type="GO" id="GO:0008270">
    <property type="term" value="F:zinc ion binding"/>
    <property type="evidence" value="ECO:0007669"/>
    <property type="project" value="UniProtKB-KW"/>
</dbReference>
<dbReference type="GO" id="GO:0045892">
    <property type="term" value="P:negative regulation of DNA-templated transcription"/>
    <property type="evidence" value="ECO:0000315"/>
    <property type="project" value="RGD"/>
</dbReference>
<dbReference type="GO" id="GO:0000122">
    <property type="term" value="P:negative regulation of transcription by RNA polymerase II"/>
    <property type="evidence" value="ECO:0000314"/>
    <property type="project" value="NTNU_SB"/>
</dbReference>
<dbReference type="GO" id="GO:0001558">
    <property type="term" value="P:regulation of cell growth"/>
    <property type="evidence" value="ECO:0000303"/>
    <property type="project" value="RGD"/>
</dbReference>
<dbReference type="GO" id="GO:0006357">
    <property type="term" value="P:regulation of transcription by RNA polymerase II"/>
    <property type="evidence" value="ECO:0000318"/>
    <property type="project" value="GO_Central"/>
</dbReference>
<dbReference type="CDD" id="cd07765">
    <property type="entry name" value="KRAB_A-box"/>
    <property type="match status" value="1"/>
</dbReference>
<dbReference type="FunFam" id="3.30.160.60:FF:000029">
    <property type="entry name" value="GLI family zinc finger 4"/>
    <property type="match status" value="1"/>
</dbReference>
<dbReference type="FunFam" id="3.30.160.60:FF:002005">
    <property type="entry name" value="Zinc finger protein 200"/>
    <property type="match status" value="1"/>
</dbReference>
<dbReference type="FunFam" id="3.30.160.60:FF:002343">
    <property type="entry name" value="Zinc finger protein 33A"/>
    <property type="match status" value="2"/>
</dbReference>
<dbReference type="FunFam" id="3.30.160.60:FF:000135">
    <property type="entry name" value="Zinc finger protein 358"/>
    <property type="match status" value="1"/>
</dbReference>
<dbReference type="FunFam" id="3.30.160.60:FF:000016">
    <property type="entry name" value="zinc finger protein 37 homolog"/>
    <property type="match status" value="1"/>
</dbReference>
<dbReference type="FunFam" id="3.30.160.60:FF:000384">
    <property type="entry name" value="Zinc finger protein 550"/>
    <property type="match status" value="1"/>
</dbReference>
<dbReference type="FunFam" id="3.30.160.60:FF:001270">
    <property type="entry name" value="zinc finger protein 583 isoform X1"/>
    <property type="match status" value="1"/>
</dbReference>
<dbReference type="FunFam" id="3.30.160.60:FF:000410">
    <property type="entry name" value="Zinc finger protein 777"/>
    <property type="match status" value="1"/>
</dbReference>
<dbReference type="Gene3D" id="6.10.140.140">
    <property type="match status" value="1"/>
</dbReference>
<dbReference type="Gene3D" id="3.30.160.60">
    <property type="entry name" value="Classic Zinc Finger"/>
    <property type="match status" value="10"/>
</dbReference>
<dbReference type="InterPro" id="IPR050717">
    <property type="entry name" value="C2H2-ZF_Transcription_Reg"/>
</dbReference>
<dbReference type="InterPro" id="IPR001909">
    <property type="entry name" value="KRAB"/>
</dbReference>
<dbReference type="InterPro" id="IPR036051">
    <property type="entry name" value="KRAB_dom_sf"/>
</dbReference>
<dbReference type="InterPro" id="IPR036236">
    <property type="entry name" value="Znf_C2H2_sf"/>
</dbReference>
<dbReference type="InterPro" id="IPR013087">
    <property type="entry name" value="Znf_C2H2_type"/>
</dbReference>
<dbReference type="PANTHER" id="PTHR14196">
    <property type="entry name" value="ODD-SKIPPED - RELATED"/>
    <property type="match status" value="1"/>
</dbReference>
<dbReference type="PANTHER" id="PTHR14196:SF12">
    <property type="entry name" value="ZINC FINGER PROTEIN 208-LIKE"/>
    <property type="match status" value="1"/>
</dbReference>
<dbReference type="Pfam" id="PF01352">
    <property type="entry name" value="KRAB"/>
    <property type="match status" value="1"/>
</dbReference>
<dbReference type="Pfam" id="PF00096">
    <property type="entry name" value="zf-C2H2"/>
    <property type="match status" value="9"/>
</dbReference>
<dbReference type="SMART" id="SM00349">
    <property type="entry name" value="KRAB"/>
    <property type="match status" value="1"/>
</dbReference>
<dbReference type="SMART" id="SM00355">
    <property type="entry name" value="ZnF_C2H2"/>
    <property type="match status" value="10"/>
</dbReference>
<dbReference type="SUPFAM" id="SSF57667">
    <property type="entry name" value="beta-beta-alpha zinc fingers"/>
    <property type="match status" value="7"/>
</dbReference>
<dbReference type="SUPFAM" id="SSF109640">
    <property type="entry name" value="KRAB domain (Kruppel-associated box)"/>
    <property type="match status" value="1"/>
</dbReference>
<dbReference type="PROSITE" id="PS50805">
    <property type="entry name" value="KRAB"/>
    <property type="match status" value="1"/>
</dbReference>
<dbReference type="PROSITE" id="PS00028">
    <property type="entry name" value="ZINC_FINGER_C2H2_1"/>
    <property type="match status" value="10"/>
</dbReference>
<dbReference type="PROSITE" id="PS50157">
    <property type="entry name" value="ZINC_FINGER_C2H2_2"/>
    <property type="match status" value="10"/>
</dbReference>
<keyword id="KW-0238">DNA-binding</keyword>
<keyword id="KW-0479">Metal-binding</keyword>
<keyword id="KW-0539">Nucleus</keyword>
<keyword id="KW-1185">Reference proteome</keyword>
<keyword id="KW-0677">Repeat</keyword>
<keyword id="KW-0678">Repressor</keyword>
<keyword id="KW-0804">Transcription</keyword>
<keyword id="KW-0805">Transcription regulation</keyword>
<keyword id="KW-0862">Zinc</keyword>
<keyword id="KW-0863">Zinc-finger</keyword>
<comment type="function">
    <text evidence="3 4">Functions as a sequence-specific transcriptional repressor.</text>
</comment>
<comment type="subunit">
    <text evidence="3">Interacts with TRIM28; enhances the transcriptional repressor activity.</text>
</comment>
<comment type="subcellular location">
    <subcellularLocation>
        <location evidence="3 4">Nucleus</location>
    </subcellularLocation>
</comment>
<comment type="tissue specificity">
    <text evidence="4">Ubiquitously expressed with higher expression in lung, kidney and testis.</text>
</comment>
<comment type="induction">
    <text evidence="4">Up-regulated by EGF; delayed early response target for EGF (at protein level).</text>
</comment>
<comment type="similarity">
    <text evidence="5">Belongs to the krueppel C2H2-type zinc-finger protein family.</text>
</comment>
<comment type="sequence caution" evidence="5">
    <conflict type="miscellaneous discrepancy">
        <sequence resource="EMBL-CDS" id="AAD05020"/>
    </conflict>
    <text>Contaminating sequence. Sequence of unknown origin in the C-terminal part.</text>
</comment>
<evidence type="ECO:0000255" key="1">
    <source>
        <dbReference type="PROSITE-ProRule" id="PRU00042"/>
    </source>
</evidence>
<evidence type="ECO:0000255" key="2">
    <source>
        <dbReference type="PROSITE-ProRule" id="PRU00119"/>
    </source>
</evidence>
<evidence type="ECO:0000269" key="3">
    <source>
    </source>
</evidence>
<evidence type="ECO:0000269" key="4">
    <source>
    </source>
</evidence>
<evidence type="ECO:0000305" key="5"/>
<feature type="chain" id="PRO_0000361568" description="Zinc finger protein 382">
    <location>
        <begin position="1"/>
        <end position="549"/>
    </location>
</feature>
<feature type="domain" description="KRAB" evidence="2">
    <location>
        <begin position="12"/>
        <end position="83"/>
    </location>
</feature>
<feature type="zinc finger region" description="C2H2-type 1" evidence="1">
    <location>
        <begin position="211"/>
        <end position="233"/>
    </location>
</feature>
<feature type="zinc finger region" description="C2H2-type 2" evidence="1">
    <location>
        <begin position="295"/>
        <end position="317"/>
    </location>
</feature>
<feature type="zinc finger region" description="C2H2-type 3" evidence="1">
    <location>
        <begin position="323"/>
        <end position="345"/>
    </location>
</feature>
<feature type="zinc finger region" description="C2H2-type 4" evidence="1">
    <location>
        <begin position="351"/>
        <end position="373"/>
    </location>
</feature>
<feature type="zinc finger region" description="C2H2-type 5" evidence="1">
    <location>
        <begin position="379"/>
        <end position="401"/>
    </location>
</feature>
<feature type="zinc finger region" description="C2H2-type 6" evidence="1">
    <location>
        <begin position="407"/>
        <end position="429"/>
    </location>
</feature>
<feature type="zinc finger region" description="C2H2-type 7" evidence="1">
    <location>
        <begin position="435"/>
        <end position="457"/>
    </location>
</feature>
<feature type="zinc finger region" description="C2H2-type 8" evidence="1">
    <location>
        <begin position="463"/>
        <end position="485"/>
    </location>
</feature>
<feature type="zinc finger region" description="C2H2-type 9" evidence="1">
    <location>
        <begin position="491"/>
        <end position="513"/>
    </location>
</feature>
<feature type="zinc finger region" description="C2H2-type 10" evidence="1">
    <location>
        <begin position="519"/>
        <end position="541"/>
    </location>
</feature>
<feature type="region of interest" description="Mediates interaction with TRIM28" evidence="3">
    <location>
        <begin position="1"/>
        <end position="105"/>
    </location>
</feature>
<feature type="region of interest" description="Represses transcription">
    <location>
        <begin position="10"/>
        <end position="51"/>
    </location>
</feature>
<feature type="region of interest" description="Represses transcription">
    <location>
        <begin position="75"/>
        <end position="210"/>
    </location>
</feature>
<feature type="region of interest" description="Required for transcriptional repression activity; probably mediates sequence-specific DNA-binding">
    <location>
        <begin position="295"/>
        <end position="549"/>
    </location>
</feature>
<feature type="mutagenesis site" description="Loss of transcriptional repressor activity. Loss of interaction with TRIM28." evidence="3">
    <original>DV</original>
    <variation>AA</variation>
    <location>
        <begin position="16"/>
        <end position="17"/>
    </location>
</feature>
<accession>A0JPL0</accession>
<accession>Q62977</accession>
<reference key="1">
    <citation type="journal article" date="1998" name="J. Clin. Invest.">
        <title>KRAB-independent suppression of neoplastic cell growth by the novel zinc finger transcription factor KS1.</title>
        <authorList>
            <person name="Gebelein B."/>
            <person name="Fernandez-Zapico M."/>
            <person name="Imoto M."/>
            <person name="Urrutia R."/>
        </authorList>
    </citation>
    <scope>NUCLEOTIDE SEQUENCE [MRNA]</scope>
    <scope>FUNCTION</scope>
    <scope>SUBCELLULAR LOCATION</scope>
    <scope>INDUCTION BY EGF</scope>
    <scope>TISSUE SPECIFICITY</scope>
    <source>
        <strain>Wistar</strain>
        <tissue>Pancreas</tissue>
    </source>
</reference>
<reference key="2">
    <citation type="journal article" date="2004" name="Genome Res.">
        <title>The status, quality, and expansion of the NIH full-length cDNA project: the Mammalian Gene Collection (MGC).</title>
        <authorList>
            <consortium name="The MGC Project Team"/>
        </authorList>
    </citation>
    <scope>NUCLEOTIDE SEQUENCE [LARGE SCALE MRNA]</scope>
    <source>
        <tissue>Brain</tissue>
    </source>
</reference>
<reference key="3">
    <citation type="journal article" date="2001" name="Mol. Cell. Biol.">
        <title>Sequence-specific transcriptional repression by KS1, a multiple-zinc-finger-Kruppel-associated box protein.</title>
        <authorList>
            <person name="Gebelein B."/>
            <person name="Urrutia R."/>
        </authorList>
    </citation>
    <scope>FUNCTION</scope>
    <scope>MUTAGENESIS OF 16-ASP-VAL-17</scope>
    <scope>INTERACTION WITH TRIM28</scope>
    <scope>SUBCELLULAR LOCATION</scope>
</reference>
<organism>
    <name type="scientific">Rattus norvegicus</name>
    <name type="common">Rat</name>
    <dbReference type="NCBI Taxonomy" id="10116"/>
    <lineage>
        <taxon>Eukaryota</taxon>
        <taxon>Metazoa</taxon>
        <taxon>Chordata</taxon>
        <taxon>Craniata</taxon>
        <taxon>Vertebrata</taxon>
        <taxon>Euteleostomi</taxon>
        <taxon>Mammalia</taxon>
        <taxon>Eutheria</taxon>
        <taxon>Euarchontoglires</taxon>
        <taxon>Glires</taxon>
        <taxon>Rodentia</taxon>
        <taxon>Myomorpha</taxon>
        <taxon>Muroidea</taxon>
        <taxon>Muridae</taxon>
        <taxon>Murinae</taxon>
        <taxon>Rattus</taxon>
    </lineage>
</organism>
<name>ZN382_RAT</name>
<protein>
    <recommendedName>
        <fullName>Zinc finger protein 382</fullName>
    </recommendedName>
    <alternativeName>
        <fullName>KRAB/zinc finger suppressor protein 1</fullName>
        <shortName>KS1</shortName>
    </alternativeName>
    <alternativeName>
        <fullName>Multiple zinc finger and krueppel-associated box protein KS1</fullName>
    </alternativeName>
</protein>
<gene>
    <name type="primary">Znf382</name>
    <name type="synonym">Zfp382</name>
</gene>
<proteinExistence type="evidence at protein level"/>
<sequence length="549" mass="63563">MNCHSVPLQGPVSFKDVTVDFTQEEWQRLDPAQKALYRDVMLENYCHFISVGFHITKPDMIRKLEQGEELWTERMFPSQSYLEDEEVLVKFRDYQDKPPTSIVIINHKKLIKERNNVYEKTLGNNHIISKTLFEYKSDGKVLKNISDFISRDINPVMGTLGDSSEWEESVLTSEQEKTHPVPTLYKQIGRNLSSSLELAQHQKTQIPEQRFECDECDSSFLMTEVAFPHDRAHRGVRDFNCSKDEIAFFEKSDLGIHPHNLMEKKCSTYNKYGKLLCRKSVFVMHPRSQVDERPFQCPYCGNSFRRKSYLIEHQRIHTGEKPYICSQCGKAFRQKTALTLHEKTHTDGKPYLCVDCGKSFRQKATLTRHHKTHTGEKAYECTQCGSAFGKKSYLIDHQRTHTGEKPYQCAECGKAFIQKTTLTVHQRTHTGEKPYMCSECGKSFCQKTTLTLHQRIHTGEKPYVCSDCGKSFRQKAILTVHYRIHTGEKSNGCPQCGKAFSRKSNLIRHQKTHTGEKPYECHECGKFFSCKSNLVAHQKTHKAETVRFQ</sequence>